<sequence>MADLVTVVKKTEEEWRAVLSPEQFRILRQKGTETPGTEEYDKFFEEGIFSCIGCKTPLYKSTTKFDAGCGWPAFFEGLPGAINRAPDPDGRRTEITCAVCDGHLGHVHKGEGYSTPTDERLCVNSVSINFNPAKPSSIT</sequence>
<evidence type="ECO:0000250" key="1"/>
<evidence type="ECO:0000250" key="2">
    <source>
        <dbReference type="UniProtKB" id="Q9ZS91"/>
    </source>
</evidence>
<evidence type="ECO:0000255" key="3">
    <source>
        <dbReference type="PROSITE-ProRule" id="PRU01126"/>
    </source>
</evidence>
<evidence type="ECO:0000305" key="4"/>
<dbReference type="EC" id="1.8.4.12"/>
<dbReference type="EMBL" id="AF118223">
    <property type="protein sequence ID" value="AAD03449.1"/>
    <property type="status" value="ALT_SEQ"/>
    <property type="molecule type" value="Genomic_DNA"/>
</dbReference>
<dbReference type="EMBL" id="AL161501">
    <property type="protein sequence ID" value="CAB80846.1"/>
    <property type="molecule type" value="Genomic_DNA"/>
</dbReference>
<dbReference type="EMBL" id="CP002687">
    <property type="protein sequence ID" value="AEE82428.1"/>
    <property type="molecule type" value="Genomic_DNA"/>
</dbReference>
<dbReference type="PIR" id="E85060">
    <property type="entry name" value="E85060"/>
</dbReference>
<dbReference type="RefSeq" id="NP_192390.1">
    <property type="nucleotide sequence ID" value="NM_116719.3"/>
</dbReference>
<dbReference type="SMR" id="Q9M0Z5"/>
<dbReference type="FunCoup" id="Q9M0Z5">
    <property type="interactions" value="22"/>
</dbReference>
<dbReference type="STRING" id="3702.Q9M0Z5"/>
<dbReference type="iPTMnet" id="Q9M0Z5"/>
<dbReference type="PaxDb" id="3702-AT4G04810.1"/>
<dbReference type="ProteomicsDB" id="250961"/>
<dbReference type="EnsemblPlants" id="AT4G04810.1">
    <property type="protein sequence ID" value="AT4G04810.1"/>
    <property type="gene ID" value="AT4G04810"/>
</dbReference>
<dbReference type="GeneID" id="825818"/>
<dbReference type="Gramene" id="AT4G04810.1">
    <property type="protein sequence ID" value="AT4G04810.1"/>
    <property type="gene ID" value="AT4G04810"/>
</dbReference>
<dbReference type="KEGG" id="ath:AT4G04810"/>
<dbReference type="Araport" id="AT4G04810"/>
<dbReference type="TAIR" id="AT4G04810">
    <property type="gene designation" value="MSRB4"/>
</dbReference>
<dbReference type="eggNOG" id="KOG0856">
    <property type="taxonomic scope" value="Eukaryota"/>
</dbReference>
<dbReference type="HOGENOM" id="CLU_031040_8_1_1"/>
<dbReference type="InParanoid" id="Q9M0Z5"/>
<dbReference type="OMA" id="RMEIICA"/>
<dbReference type="PhylomeDB" id="Q9M0Z5"/>
<dbReference type="PRO" id="PR:Q9M0Z5"/>
<dbReference type="Proteomes" id="UP000006548">
    <property type="component" value="Chromosome 4"/>
</dbReference>
<dbReference type="ExpressionAtlas" id="Q9M0Z5">
    <property type="expression patterns" value="baseline and differential"/>
</dbReference>
<dbReference type="GO" id="GO:0005829">
    <property type="term" value="C:cytosol"/>
    <property type="evidence" value="ECO:0007669"/>
    <property type="project" value="UniProtKB-SubCell"/>
</dbReference>
<dbReference type="GO" id="GO:0046872">
    <property type="term" value="F:metal ion binding"/>
    <property type="evidence" value="ECO:0007669"/>
    <property type="project" value="UniProtKB-KW"/>
</dbReference>
<dbReference type="GO" id="GO:0033743">
    <property type="term" value="F:peptide-methionine (R)-S-oxide reductase activity"/>
    <property type="evidence" value="ECO:0007669"/>
    <property type="project" value="UniProtKB-EC"/>
</dbReference>
<dbReference type="GO" id="GO:0030091">
    <property type="term" value="P:protein repair"/>
    <property type="evidence" value="ECO:0007669"/>
    <property type="project" value="InterPro"/>
</dbReference>
<dbReference type="GO" id="GO:0006979">
    <property type="term" value="P:response to oxidative stress"/>
    <property type="evidence" value="ECO:0007669"/>
    <property type="project" value="InterPro"/>
</dbReference>
<dbReference type="Gene3D" id="2.170.150.20">
    <property type="entry name" value="Peptide methionine sulfoxide reductase"/>
    <property type="match status" value="1"/>
</dbReference>
<dbReference type="InterPro" id="IPR028427">
    <property type="entry name" value="Met_Sox_Rdtase_MsrB"/>
</dbReference>
<dbReference type="InterPro" id="IPR002579">
    <property type="entry name" value="Met_Sox_Rdtase_MsrB_dom"/>
</dbReference>
<dbReference type="InterPro" id="IPR011057">
    <property type="entry name" value="Mss4-like_sf"/>
</dbReference>
<dbReference type="NCBIfam" id="TIGR00357">
    <property type="entry name" value="peptide-methionine (R)-S-oxide reductase MsrB"/>
    <property type="match status" value="1"/>
</dbReference>
<dbReference type="PANTHER" id="PTHR46081">
    <property type="entry name" value="PEPTIDE METHIONINE SULFOXIDE REDUCTASE 2"/>
    <property type="match status" value="1"/>
</dbReference>
<dbReference type="PANTHER" id="PTHR46081:SF11">
    <property type="entry name" value="PEPTIDE METHIONINE SULFOXIDE REDUCTASE B4-RELATED"/>
    <property type="match status" value="1"/>
</dbReference>
<dbReference type="Pfam" id="PF01641">
    <property type="entry name" value="SelR"/>
    <property type="match status" value="1"/>
</dbReference>
<dbReference type="SUPFAM" id="SSF51316">
    <property type="entry name" value="Mss4-like"/>
    <property type="match status" value="1"/>
</dbReference>
<dbReference type="PROSITE" id="PS51790">
    <property type="entry name" value="MSRB"/>
    <property type="match status" value="1"/>
</dbReference>
<organism>
    <name type="scientific">Arabidopsis thaliana</name>
    <name type="common">Mouse-ear cress</name>
    <dbReference type="NCBI Taxonomy" id="3702"/>
    <lineage>
        <taxon>Eukaryota</taxon>
        <taxon>Viridiplantae</taxon>
        <taxon>Streptophyta</taxon>
        <taxon>Embryophyta</taxon>
        <taxon>Tracheophyta</taxon>
        <taxon>Spermatophyta</taxon>
        <taxon>Magnoliopsida</taxon>
        <taxon>eudicotyledons</taxon>
        <taxon>Gunneridae</taxon>
        <taxon>Pentapetalae</taxon>
        <taxon>rosids</taxon>
        <taxon>malvids</taxon>
        <taxon>Brassicales</taxon>
        <taxon>Brassicaceae</taxon>
        <taxon>Camelineae</taxon>
        <taxon>Arabidopsis</taxon>
    </lineage>
</organism>
<protein>
    <recommendedName>
        <fullName>Peptide methionine sulfoxide reductase B4</fullName>
        <shortName>AtMSRB4</shortName>
        <ecNumber>1.8.4.12</ecNumber>
    </recommendedName>
    <alternativeName>
        <fullName>Peptide-methionine (R)-S-oxide reductase</fullName>
    </alternativeName>
</protein>
<gene>
    <name type="primary">MSRB4</name>
    <name type="ordered locus">At4g04810</name>
    <name type="ORF">T4B21.22</name>
</gene>
<reference key="1">
    <citation type="journal article" date="1999" name="Nature">
        <title>Sequence and analysis of chromosome 4 of the plant Arabidopsis thaliana.</title>
        <authorList>
            <person name="Mayer K.F.X."/>
            <person name="Schueller C."/>
            <person name="Wambutt R."/>
            <person name="Murphy G."/>
            <person name="Volckaert G."/>
            <person name="Pohl T."/>
            <person name="Duesterhoeft A."/>
            <person name="Stiekema W."/>
            <person name="Entian K.-D."/>
            <person name="Terryn N."/>
            <person name="Harris B."/>
            <person name="Ansorge W."/>
            <person name="Brandt P."/>
            <person name="Grivell L.A."/>
            <person name="Rieger M."/>
            <person name="Weichselgartner M."/>
            <person name="de Simone V."/>
            <person name="Obermaier B."/>
            <person name="Mache R."/>
            <person name="Mueller M."/>
            <person name="Kreis M."/>
            <person name="Delseny M."/>
            <person name="Puigdomenech P."/>
            <person name="Watson M."/>
            <person name="Schmidtheini T."/>
            <person name="Reichert B."/>
            <person name="Portetelle D."/>
            <person name="Perez-Alonso M."/>
            <person name="Boutry M."/>
            <person name="Bancroft I."/>
            <person name="Vos P."/>
            <person name="Hoheisel J."/>
            <person name="Zimmermann W."/>
            <person name="Wedler H."/>
            <person name="Ridley P."/>
            <person name="Langham S.-A."/>
            <person name="McCullagh B."/>
            <person name="Bilham L."/>
            <person name="Robben J."/>
            <person name="van der Schueren J."/>
            <person name="Grymonprez B."/>
            <person name="Chuang Y.-J."/>
            <person name="Vandenbussche F."/>
            <person name="Braeken M."/>
            <person name="Weltjens I."/>
            <person name="Voet M."/>
            <person name="Bastiaens I."/>
            <person name="Aert R."/>
            <person name="Defoor E."/>
            <person name="Weitzenegger T."/>
            <person name="Bothe G."/>
            <person name="Ramsperger U."/>
            <person name="Hilbert H."/>
            <person name="Braun M."/>
            <person name="Holzer E."/>
            <person name="Brandt A."/>
            <person name="Peters S."/>
            <person name="van Staveren M."/>
            <person name="Dirkse W."/>
            <person name="Mooijman P."/>
            <person name="Klein Lankhorst R."/>
            <person name="Rose M."/>
            <person name="Hauf J."/>
            <person name="Koetter P."/>
            <person name="Berneiser S."/>
            <person name="Hempel S."/>
            <person name="Feldpausch M."/>
            <person name="Lamberth S."/>
            <person name="Van den Daele H."/>
            <person name="De Keyser A."/>
            <person name="Buysshaert C."/>
            <person name="Gielen J."/>
            <person name="Villarroel R."/>
            <person name="De Clercq R."/>
            <person name="van Montagu M."/>
            <person name="Rogers J."/>
            <person name="Cronin A."/>
            <person name="Quail M.A."/>
            <person name="Bray-Allen S."/>
            <person name="Clark L."/>
            <person name="Doggett J."/>
            <person name="Hall S."/>
            <person name="Kay M."/>
            <person name="Lennard N."/>
            <person name="McLay K."/>
            <person name="Mayes R."/>
            <person name="Pettett A."/>
            <person name="Rajandream M.A."/>
            <person name="Lyne M."/>
            <person name="Benes V."/>
            <person name="Rechmann S."/>
            <person name="Borkova D."/>
            <person name="Bloecker H."/>
            <person name="Scharfe M."/>
            <person name="Grimm M."/>
            <person name="Loehnert T.-H."/>
            <person name="Dose S."/>
            <person name="de Haan M."/>
            <person name="Maarse A.C."/>
            <person name="Schaefer M."/>
            <person name="Mueller-Auer S."/>
            <person name="Gabel C."/>
            <person name="Fuchs M."/>
            <person name="Fartmann B."/>
            <person name="Granderath K."/>
            <person name="Dauner D."/>
            <person name="Herzl A."/>
            <person name="Neumann S."/>
            <person name="Argiriou A."/>
            <person name="Vitale D."/>
            <person name="Liguori R."/>
            <person name="Piravandi E."/>
            <person name="Massenet O."/>
            <person name="Quigley F."/>
            <person name="Clabauld G."/>
            <person name="Muendlein A."/>
            <person name="Felber R."/>
            <person name="Schnabl S."/>
            <person name="Hiller R."/>
            <person name="Schmidt W."/>
            <person name="Lecharny A."/>
            <person name="Aubourg S."/>
            <person name="Chefdor F."/>
            <person name="Cooke R."/>
            <person name="Berger C."/>
            <person name="Monfort A."/>
            <person name="Casacuberta E."/>
            <person name="Gibbons T."/>
            <person name="Weber N."/>
            <person name="Vandenbol M."/>
            <person name="Bargues M."/>
            <person name="Terol J."/>
            <person name="Torres A."/>
            <person name="Perez-Perez A."/>
            <person name="Purnelle B."/>
            <person name="Bent E."/>
            <person name="Johnson S."/>
            <person name="Tacon D."/>
            <person name="Jesse T."/>
            <person name="Heijnen L."/>
            <person name="Schwarz S."/>
            <person name="Scholler P."/>
            <person name="Heber S."/>
            <person name="Francs P."/>
            <person name="Bielke C."/>
            <person name="Frishman D."/>
            <person name="Haase D."/>
            <person name="Lemcke K."/>
            <person name="Mewes H.-W."/>
            <person name="Stocker S."/>
            <person name="Zaccaria P."/>
            <person name="Bevan M."/>
            <person name="Wilson R.K."/>
            <person name="de la Bastide M."/>
            <person name="Habermann K."/>
            <person name="Parnell L."/>
            <person name="Dedhia N."/>
            <person name="Gnoj L."/>
            <person name="Schutz K."/>
            <person name="Huang E."/>
            <person name="Spiegel L."/>
            <person name="Sekhon M."/>
            <person name="Murray J."/>
            <person name="Sheet P."/>
            <person name="Cordes M."/>
            <person name="Abu-Threideh J."/>
            <person name="Stoneking T."/>
            <person name="Kalicki J."/>
            <person name="Graves T."/>
            <person name="Harmon G."/>
            <person name="Edwards J."/>
            <person name="Latreille P."/>
            <person name="Courtney L."/>
            <person name="Cloud J."/>
            <person name="Abbott A."/>
            <person name="Scott K."/>
            <person name="Johnson D."/>
            <person name="Minx P."/>
            <person name="Bentley D."/>
            <person name="Fulton B."/>
            <person name="Miller N."/>
            <person name="Greco T."/>
            <person name="Kemp K."/>
            <person name="Kramer J."/>
            <person name="Fulton L."/>
            <person name="Mardis E."/>
            <person name="Dante M."/>
            <person name="Pepin K."/>
            <person name="Hillier L.W."/>
            <person name="Nelson J."/>
            <person name="Spieth J."/>
            <person name="Ryan E."/>
            <person name="Andrews S."/>
            <person name="Geisel C."/>
            <person name="Layman D."/>
            <person name="Du H."/>
            <person name="Ali J."/>
            <person name="Berghoff A."/>
            <person name="Jones K."/>
            <person name="Drone K."/>
            <person name="Cotton M."/>
            <person name="Joshu C."/>
            <person name="Antonoiu B."/>
            <person name="Zidanic M."/>
            <person name="Strong C."/>
            <person name="Sun H."/>
            <person name="Lamar B."/>
            <person name="Yordan C."/>
            <person name="Ma P."/>
            <person name="Zhong J."/>
            <person name="Preston R."/>
            <person name="Vil D."/>
            <person name="Shekher M."/>
            <person name="Matero A."/>
            <person name="Shah R."/>
            <person name="Swaby I.K."/>
            <person name="O'Shaughnessy A."/>
            <person name="Rodriguez M."/>
            <person name="Hoffman J."/>
            <person name="Till S."/>
            <person name="Granat S."/>
            <person name="Shohdy N."/>
            <person name="Hasegawa A."/>
            <person name="Hameed A."/>
            <person name="Lodhi M."/>
            <person name="Johnson A."/>
            <person name="Chen E."/>
            <person name="Marra M.A."/>
            <person name="Martienssen R."/>
            <person name="McCombie W.R."/>
        </authorList>
    </citation>
    <scope>NUCLEOTIDE SEQUENCE [LARGE SCALE GENOMIC DNA]</scope>
    <source>
        <strain>cv. Columbia</strain>
    </source>
</reference>
<reference key="2">
    <citation type="journal article" date="2017" name="Plant J.">
        <title>Araport11: a complete reannotation of the Arabidopsis thaliana reference genome.</title>
        <authorList>
            <person name="Cheng C.Y."/>
            <person name="Krishnakumar V."/>
            <person name="Chan A.P."/>
            <person name="Thibaud-Nissen F."/>
            <person name="Schobel S."/>
            <person name="Town C.D."/>
        </authorList>
    </citation>
    <scope>GENOME REANNOTATION</scope>
    <source>
        <strain>cv. Columbia</strain>
    </source>
</reference>
<reference key="3">
    <citation type="journal article" date="2006" name="Photosyn. Res.">
        <title>Plant methionine sulfoxide reductase A and B multigenic families.</title>
        <authorList>
            <person name="Rouhier N."/>
            <person name="Vieira Dos Santos C."/>
            <person name="Tarrago L."/>
            <person name="Rey P."/>
        </authorList>
    </citation>
    <scope>GENE FAMILY</scope>
    <scope>NOMENCLATURE</scope>
</reference>
<proteinExistence type="evidence at transcript level"/>
<feature type="initiator methionine" description="Removed" evidence="2">
    <location>
        <position position="1"/>
    </location>
</feature>
<feature type="chain" id="PRO_0000395522" description="Peptide methionine sulfoxide reductase B4">
    <location>
        <begin position="2"/>
        <end position="139"/>
    </location>
</feature>
<feature type="domain" description="MsrB" evidence="3">
    <location>
        <begin position="12"/>
        <end position="133"/>
    </location>
</feature>
<feature type="active site" description="Nucleophile" evidence="3">
    <location>
        <position position="122"/>
    </location>
</feature>
<feature type="binding site" evidence="3">
    <location>
        <position position="51"/>
    </location>
    <ligand>
        <name>Zn(2+)</name>
        <dbReference type="ChEBI" id="CHEBI:29105"/>
    </ligand>
</feature>
<feature type="binding site" evidence="3">
    <location>
        <position position="54"/>
    </location>
    <ligand>
        <name>Zn(2+)</name>
        <dbReference type="ChEBI" id="CHEBI:29105"/>
    </ligand>
</feature>
<feature type="binding site" evidence="3">
    <location>
        <position position="97"/>
    </location>
    <ligand>
        <name>Zn(2+)</name>
        <dbReference type="ChEBI" id="CHEBI:29105"/>
    </ligand>
</feature>
<feature type="binding site" evidence="3">
    <location>
        <position position="100"/>
    </location>
    <ligand>
        <name>Zn(2+)</name>
        <dbReference type="ChEBI" id="CHEBI:29105"/>
    </ligand>
</feature>
<feature type="modified residue" description="N-acetylalanine" evidence="2">
    <location>
        <position position="2"/>
    </location>
</feature>
<feature type="disulfide bond" description="Redox-active" evidence="1">
    <location>
        <begin position="69"/>
        <end position="122"/>
    </location>
</feature>
<name>MSRB4_ARATH</name>
<keyword id="KW-0007">Acetylation</keyword>
<keyword id="KW-0963">Cytoplasm</keyword>
<keyword id="KW-1015">Disulfide bond</keyword>
<keyword id="KW-0249">Electron transport</keyword>
<keyword id="KW-0479">Metal-binding</keyword>
<keyword id="KW-0560">Oxidoreductase</keyword>
<keyword id="KW-0676">Redox-active center</keyword>
<keyword id="KW-1185">Reference proteome</keyword>
<keyword id="KW-0813">Transport</keyword>
<keyword id="KW-0862">Zinc</keyword>
<accession>Q9M0Z5</accession>
<accession>Q9ZS93</accession>
<comment type="function">
    <text evidence="1">Catalyzes the reduction of methionine sulfoxide (MetSO) to methionine in proteins. Plays a protective role against oxidative stress by restoring activity to proteins that have been inactivated by methionine oxidation. MSRB family specifically reduces the MetSO R-enantiomer (By similarity).</text>
</comment>
<comment type="catalytic activity">
    <reaction>
        <text>L-methionyl-[protein] + [thioredoxin]-disulfide + H2O = L-methionyl-(R)-S-oxide-[protein] + [thioredoxin]-dithiol</text>
        <dbReference type="Rhea" id="RHEA:24164"/>
        <dbReference type="Rhea" id="RHEA-COMP:10698"/>
        <dbReference type="Rhea" id="RHEA-COMP:10700"/>
        <dbReference type="Rhea" id="RHEA-COMP:12313"/>
        <dbReference type="Rhea" id="RHEA-COMP:12314"/>
        <dbReference type="ChEBI" id="CHEBI:15377"/>
        <dbReference type="ChEBI" id="CHEBI:16044"/>
        <dbReference type="ChEBI" id="CHEBI:29950"/>
        <dbReference type="ChEBI" id="CHEBI:45764"/>
        <dbReference type="ChEBI" id="CHEBI:50058"/>
        <dbReference type="EC" id="1.8.4.12"/>
    </reaction>
</comment>
<comment type="cofactor">
    <cofactor evidence="1">
        <name>Zn(2+)</name>
        <dbReference type="ChEBI" id="CHEBI:29105"/>
    </cofactor>
    <text evidence="1">Binds 1 zinc ion per subunit.</text>
</comment>
<comment type="subcellular location">
    <subcellularLocation>
        <location evidence="4">Cytoplasm</location>
        <location evidence="4">Cytosol</location>
    </subcellularLocation>
</comment>
<comment type="similarity">
    <text evidence="4">Belongs to the MsrB Met sulfoxide reductase family.</text>
</comment>
<comment type="sequence caution" evidence="4">
    <conflict type="erroneous gene model prediction">
        <sequence resource="EMBL-CDS" id="AAD03449"/>
    </conflict>
    <text>The predicted gene has been split into 2 genes: At4g04800 and At4g04810.</text>
</comment>